<keyword id="KW-0066">ATP synthesis</keyword>
<keyword id="KW-1003">Cell membrane</keyword>
<keyword id="KW-0138">CF(0)</keyword>
<keyword id="KW-0375">Hydrogen ion transport</keyword>
<keyword id="KW-0406">Ion transport</keyword>
<keyword id="KW-0472">Membrane</keyword>
<keyword id="KW-0812">Transmembrane</keyword>
<keyword id="KW-1133">Transmembrane helix</keyword>
<keyword id="KW-0813">Transport</keyword>
<dbReference type="EMBL" id="CP000728">
    <property type="protein sequence ID" value="ABS41687.1"/>
    <property type="molecule type" value="Genomic_DNA"/>
</dbReference>
<dbReference type="RefSeq" id="WP_003405056.1">
    <property type="nucleotide sequence ID" value="NC_009699.1"/>
</dbReference>
<dbReference type="SMR" id="A7G9Q5"/>
<dbReference type="KEGG" id="cbf:CLI_0207"/>
<dbReference type="HOGENOM" id="CLU_079215_4_0_9"/>
<dbReference type="Proteomes" id="UP000002410">
    <property type="component" value="Chromosome"/>
</dbReference>
<dbReference type="GO" id="GO:0005886">
    <property type="term" value="C:plasma membrane"/>
    <property type="evidence" value="ECO:0007669"/>
    <property type="project" value="UniProtKB-SubCell"/>
</dbReference>
<dbReference type="GO" id="GO:0045259">
    <property type="term" value="C:proton-transporting ATP synthase complex"/>
    <property type="evidence" value="ECO:0007669"/>
    <property type="project" value="UniProtKB-KW"/>
</dbReference>
<dbReference type="GO" id="GO:0046933">
    <property type="term" value="F:proton-transporting ATP synthase activity, rotational mechanism"/>
    <property type="evidence" value="ECO:0007669"/>
    <property type="project" value="UniProtKB-UniRule"/>
</dbReference>
<dbReference type="GO" id="GO:0046961">
    <property type="term" value="F:proton-transporting ATPase activity, rotational mechanism"/>
    <property type="evidence" value="ECO:0007669"/>
    <property type="project" value="TreeGrafter"/>
</dbReference>
<dbReference type="CDD" id="cd06503">
    <property type="entry name" value="ATP-synt_Fo_b"/>
    <property type="match status" value="1"/>
</dbReference>
<dbReference type="Gene3D" id="1.20.5.620">
    <property type="entry name" value="F1F0 ATP synthase subunit B, membrane domain"/>
    <property type="match status" value="1"/>
</dbReference>
<dbReference type="HAMAP" id="MF_01398">
    <property type="entry name" value="ATP_synth_b_bprime"/>
    <property type="match status" value="1"/>
</dbReference>
<dbReference type="InterPro" id="IPR028987">
    <property type="entry name" value="ATP_synth_B-like_membr_sf"/>
</dbReference>
<dbReference type="InterPro" id="IPR002146">
    <property type="entry name" value="ATP_synth_b/b'su_bac/chlpt"/>
</dbReference>
<dbReference type="InterPro" id="IPR005864">
    <property type="entry name" value="ATP_synth_F0_bsu_bac"/>
</dbReference>
<dbReference type="InterPro" id="IPR050059">
    <property type="entry name" value="ATP_synthase_B_chain"/>
</dbReference>
<dbReference type="NCBIfam" id="TIGR01144">
    <property type="entry name" value="ATP_synt_b"/>
    <property type="match status" value="1"/>
</dbReference>
<dbReference type="NCBIfam" id="NF009992">
    <property type="entry name" value="PRK13461.1"/>
    <property type="match status" value="1"/>
</dbReference>
<dbReference type="PANTHER" id="PTHR33445:SF1">
    <property type="entry name" value="ATP SYNTHASE SUBUNIT B"/>
    <property type="match status" value="1"/>
</dbReference>
<dbReference type="PANTHER" id="PTHR33445">
    <property type="entry name" value="ATP SYNTHASE SUBUNIT B', CHLOROPLASTIC"/>
    <property type="match status" value="1"/>
</dbReference>
<dbReference type="Pfam" id="PF00430">
    <property type="entry name" value="ATP-synt_B"/>
    <property type="match status" value="1"/>
</dbReference>
<dbReference type="SUPFAM" id="SSF81573">
    <property type="entry name" value="F1F0 ATP synthase subunit B, membrane domain"/>
    <property type="match status" value="1"/>
</dbReference>
<protein>
    <recommendedName>
        <fullName evidence="1">ATP synthase subunit b</fullName>
    </recommendedName>
    <alternativeName>
        <fullName evidence="1">ATP synthase F(0) sector subunit b</fullName>
    </alternativeName>
    <alternativeName>
        <fullName evidence="1">ATPase subunit I</fullName>
    </alternativeName>
    <alternativeName>
        <fullName evidence="1">F-type ATPase subunit b</fullName>
        <shortName evidence="1">F-ATPase subunit b</shortName>
    </alternativeName>
</protein>
<reference key="1">
    <citation type="submission" date="2007-06" db="EMBL/GenBank/DDBJ databases">
        <authorList>
            <person name="Brinkac L.M."/>
            <person name="Daugherty S."/>
            <person name="Dodson R.J."/>
            <person name="Madupu R."/>
            <person name="Brown J.L."/>
            <person name="Bruce D."/>
            <person name="Detter C."/>
            <person name="Munk C."/>
            <person name="Smith L.A."/>
            <person name="Smith T.J."/>
            <person name="White O."/>
            <person name="Brettin T.S."/>
        </authorList>
    </citation>
    <scope>NUCLEOTIDE SEQUENCE [LARGE SCALE GENOMIC DNA]</scope>
    <source>
        <strain>Langeland / NCTC 10281 / Type F</strain>
    </source>
</reference>
<feature type="chain" id="PRO_0000368424" description="ATP synthase subunit b">
    <location>
        <begin position="1"/>
        <end position="159"/>
    </location>
</feature>
<feature type="transmembrane region" description="Helical" evidence="1">
    <location>
        <begin position="2"/>
        <end position="22"/>
    </location>
</feature>
<gene>
    <name evidence="1" type="primary">atpF</name>
    <name type="ordered locus">CLI_0207</name>
</gene>
<proteinExistence type="inferred from homology"/>
<name>ATPF_CLOBL</name>
<evidence type="ECO:0000255" key="1">
    <source>
        <dbReference type="HAMAP-Rule" id="MF_01398"/>
    </source>
</evidence>
<sequence length="159" mass="18352">MNISIPQIIAAILNFIILLLIVKHFWFDKITAVVDSRQSEIINKIEDTDKNQKLALELKEKNELELSNAKNQGKTIVEEYKSKAENVYEDIVKEAHEEADRIIKKSRLEAERQKKNAEEEIRAEAVELAVLVSSKTLEKTIDDLEHRRLIKDFISKVGI</sequence>
<comment type="function">
    <text evidence="1">F(1)F(0) ATP synthase produces ATP from ADP in the presence of a proton or sodium gradient. F-type ATPases consist of two structural domains, F(1) containing the extramembraneous catalytic core and F(0) containing the membrane proton channel, linked together by a central stalk and a peripheral stalk. During catalysis, ATP synthesis in the catalytic domain of F(1) is coupled via a rotary mechanism of the central stalk subunits to proton translocation.</text>
</comment>
<comment type="function">
    <text evidence="1">Component of the F(0) channel, it forms part of the peripheral stalk, linking F(1) to F(0).</text>
</comment>
<comment type="subunit">
    <text evidence="1">F-type ATPases have 2 components, F(1) - the catalytic core - and F(0) - the membrane proton channel. F(1) has five subunits: alpha(3), beta(3), gamma(1), delta(1), epsilon(1). F(0) has three main subunits: a(1), b(2) and c(10-14). The alpha and beta chains form an alternating ring which encloses part of the gamma chain. F(1) is attached to F(0) by a central stalk formed by the gamma and epsilon chains, while a peripheral stalk is formed by the delta and b chains.</text>
</comment>
<comment type="subcellular location">
    <subcellularLocation>
        <location evidence="1">Cell membrane</location>
        <topology evidence="1">Single-pass membrane protein</topology>
    </subcellularLocation>
</comment>
<comment type="similarity">
    <text evidence="1">Belongs to the ATPase B chain family.</text>
</comment>
<organism>
    <name type="scientific">Clostridium botulinum (strain Langeland / NCTC 10281 / Type F)</name>
    <dbReference type="NCBI Taxonomy" id="441772"/>
    <lineage>
        <taxon>Bacteria</taxon>
        <taxon>Bacillati</taxon>
        <taxon>Bacillota</taxon>
        <taxon>Clostridia</taxon>
        <taxon>Eubacteriales</taxon>
        <taxon>Clostridiaceae</taxon>
        <taxon>Clostridium</taxon>
    </lineage>
</organism>
<accession>A7G9Q5</accession>